<evidence type="ECO:0000250" key="1">
    <source>
        <dbReference type="UniProtKB" id="Q9CPY4"/>
    </source>
</evidence>
<evidence type="ECO:0000256" key="2">
    <source>
        <dbReference type="SAM" id="MobiDB-lite"/>
    </source>
</evidence>
<evidence type="ECO:0000269" key="3">
    <source>
    </source>
</evidence>
<evidence type="ECO:0000269" key="4">
    <source>
    </source>
</evidence>
<evidence type="ECO:0000269" key="5">
    <source>
    </source>
</evidence>
<evidence type="ECO:0000269" key="6">
    <source>
    </source>
</evidence>
<evidence type="ECO:0000305" key="7"/>
<evidence type="ECO:0007829" key="8">
    <source>
        <dbReference type="PDB" id="2M1L"/>
    </source>
</evidence>
<feature type="chain" id="PRO_0000079963" description="Cyclin-dependent kinase 2-associated protein 2">
    <location>
        <begin position="1"/>
        <end position="126"/>
    </location>
</feature>
<feature type="region of interest" description="Disordered" evidence="2">
    <location>
        <begin position="1"/>
        <end position="48"/>
    </location>
</feature>
<feature type="region of interest" description="Interaction with CDK2" evidence="5">
    <location>
        <begin position="64"/>
        <end position="106"/>
    </location>
</feature>
<feature type="compositionally biased region" description="Low complexity" evidence="2">
    <location>
        <begin position="9"/>
        <end position="43"/>
    </location>
</feature>
<feature type="strand" evidence="8">
    <location>
        <begin position="67"/>
        <end position="70"/>
    </location>
</feature>
<feature type="helix" evidence="8">
    <location>
        <begin position="72"/>
        <end position="85"/>
    </location>
</feature>
<feature type="helix" evidence="8">
    <location>
        <begin position="88"/>
        <end position="92"/>
    </location>
</feature>
<feature type="helix" evidence="8">
    <location>
        <begin position="96"/>
        <end position="120"/>
    </location>
</feature>
<gene>
    <name type="primary">CDK2AP2</name>
    <name type="synonym">DOC1R</name>
</gene>
<organism>
    <name type="scientific">Homo sapiens</name>
    <name type="common">Human</name>
    <dbReference type="NCBI Taxonomy" id="9606"/>
    <lineage>
        <taxon>Eukaryota</taxon>
        <taxon>Metazoa</taxon>
        <taxon>Chordata</taxon>
        <taxon>Craniata</taxon>
        <taxon>Vertebrata</taxon>
        <taxon>Euteleostomi</taxon>
        <taxon>Mammalia</taxon>
        <taxon>Eutheria</taxon>
        <taxon>Euarchontoglires</taxon>
        <taxon>Primates</taxon>
        <taxon>Haplorrhini</taxon>
        <taxon>Catarrhini</taxon>
        <taxon>Hominidae</taxon>
        <taxon>Homo</taxon>
    </lineage>
</organism>
<reference key="1">
    <citation type="journal article" date="1999" name="Biochem. Biophys. Res. Commun.">
        <title>Identification and mutation analysis of DOC-1R, a DOC-1 growth suppressor-related gene.</title>
        <authorList>
            <person name="Zhang X."/>
            <person name="Tsao H."/>
            <person name="Tsuji T."/>
            <person name="Minoshima S."/>
            <person name="McBride J."/>
            <person name="Majewski P."/>
            <person name="Todd R."/>
            <person name="Shimizu N."/>
            <person name="Wong D.T."/>
            <person name="Housman D.E."/>
            <person name="Haluska F.G."/>
        </authorList>
    </citation>
    <scope>NUCLEOTIDE SEQUENCE [MRNA]</scope>
    <scope>SUBCELLULAR LOCATION</scope>
    <scope>TISSUE SPECIFICITY</scope>
</reference>
<reference key="2">
    <citation type="submission" date="2003-05" db="EMBL/GenBank/DDBJ databases">
        <title>Cloning of human full-length CDSs in BD Creator(TM) system donor vector.</title>
        <authorList>
            <person name="Kalnine N."/>
            <person name="Chen X."/>
            <person name="Rolfs A."/>
            <person name="Halleck A."/>
            <person name="Hines L."/>
            <person name="Eisenstein S."/>
            <person name="Koundinya M."/>
            <person name="Raphael J."/>
            <person name="Moreira D."/>
            <person name="Kelley T."/>
            <person name="LaBaer J."/>
            <person name="Lin Y."/>
            <person name="Phelan M."/>
            <person name="Farmer A."/>
        </authorList>
    </citation>
    <scope>NUCLEOTIDE SEQUENCE [LARGE SCALE MRNA]</scope>
</reference>
<reference key="3">
    <citation type="journal article" date="2004" name="Genome Res.">
        <title>The status, quality, and expansion of the NIH full-length cDNA project: the Mammalian Gene Collection (MGC).</title>
        <authorList>
            <consortium name="The MGC Project Team"/>
        </authorList>
    </citation>
    <scope>NUCLEOTIDE SEQUENCE [LARGE SCALE MRNA]</scope>
    <source>
        <tissue>Brain</tissue>
        <tissue>Ovary</tissue>
    </source>
</reference>
<reference key="4">
    <citation type="journal article" date="2004" name="Biochem. Biophys. Res. Commun.">
        <title>Interaction of the CDK2-associated protein-1, p12(DOC-1/CDK2AP1), with its homolog, p14(DOC-1R).</title>
        <authorList>
            <person name="Buajeeb W."/>
            <person name="Zhang X."/>
            <person name="Ohyama H."/>
            <person name="Han D."/>
            <person name="Surarit R."/>
            <person name="Kim Y."/>
            <person name="Wong D.T."/>
        </authorList>
    </citation>
    <scope>INTERACTION WITH CDK2AP1</scope>
</reference>
<reference key="5">
    <citation type="journal article" date="2013" name="Int. J. Biol. Sci.">
        <title>Overexpression of DOC-1R inhibits cell cycle G1/S transition by repressing CDK2 expression and activation.</title>
        <authorList>
            <person name="Liu Q."/>
            <person name="Liu X."/>
            <person name="Gao J."/>
            <person name="Shi X."/>
            <person name="Hu X."/>
            <person name="Wang S."/>
            <person name="Luo Y."/>
        </authorList>
    </citation>
    <scope>FUNCTION</scope>
    <scope>INTERACTION WITH CDK2</scope>
</reference>
<reference key="6">
    <citation type="journal article" date="2021" name="FEBS J.">
        <title>Cross-linking mass spectrometry reveals the structural topology of peripheral NuRD subunits relative to the core complex.</title>
        <authorList>
            <person name="Spruijt C.G."/>
            <person name="Graewe C."/>
            <person name="Kleinendorst S.C."/>
            <person name="Baltissen M.P.A."/>
            <person name="Vermeulen M."/>
        </authorList>
    </citation>
    <scope>FUNCTION</scope>
    <scope>IDENTIFICATION IN THE NURD COMPLEX</scope>
    <scope>IDENTIFICATION BY MASS SPECTROMETRY</scope>
    <scope>SUBCELLULAR LOCATION</scope>
</reference>
<sequence>MSYKPIAPAPSSTPGSSTPGPGTPVPTGSVPSPSGSVPGAGAPFRPLFNDFGPPSMGYVQAMKPPGAQGSQSTYTDLLSVIEEMGKEIRPTYAGSKSAMERLKRGIIHARALVRECLAETERNART</sequence>
<comment type="function">
    <text evidence="1 5 6">Acts as a component of the histone deacetylase NuRD complex which participates in the remodeling of chromatin (PubMed:33283408). Inhibits cell cycle G1/S phase transition by repressing CDK2 expression and activation; represses CDK2 activation by inhibiting its interaction with cyclin E and A (PubMed:23781148). Plays a role in regulating the self-renewal of embryonic stem cells (ESCs) and in maintaining cell survival during terminal differentiation of ESCs (By similarity). Regulates microtubule organization of metaphase II oocytes (By similarity).</text>
</comment>
<comment type="subunit">
    <text evidence="1 4 5 6">Component of the nucleosome remodeling and deacetylase (NuRD) repressor complex, composed of core proteins MTA1, MTA2, MTA3, RBBP4, RBBP7, HDAC1, HDAC2, MBD2, MBD3, and peripherally associated proteins CDK2AP1, CDK2AP2, GATAD2A, GATAD2B, CHD3, CHD4 and CHD5 (PubMed:33283408). The exact stoichiometry of the NuRD complex is unknown, and some subunits such as MBD2 and MBD3, GATAD2A and GATAD2B, and CHD3, CHD4 and CHD5 define mutually exclusive NuRD complexes (PubMed:33283408). Interacts with CDK2AP1 (PubMed:14985111). Interacts with CDK2 (PubMed:23781148). Interacts with MAPK1 (By similarity).</text>
</comment>
<comment type="interaction">
    <interactant intactId="EBI-2808135">
        <id>O75956</id>
    </interactant>
    <interactant intactId="EBI-748896">
        <id>Q96HT8</id>
        <label>MRFAP1L1</label>
    </interactant>
    <organismsDiffer>false</organismsDiffer>
    <experiments>3</experiments>
</comment>
<comment type="subcellular location">
    <subcellularLocation>
        <location evidence="3">Cytoplasm</location>
    </subcellularLocation>
    <subcellularLocation>
        <location evidence="3 6">Nucleus</location>
    </subcellularLocation>
    <text evidence="1">Accumulates in immature oocytes in the nucleus. During the first meiotic division, accumulates in the cytoplasm and localizes in dots in the vicinity of the chromosomes in a region enriched in microtubules.</text>
</comment>
<comment type="tissue specificity">
    <text evidence="3">Ubiquitous.</text>
</comment>
<comment type="PTM">
    <text evidence="1">Phosphorylated by MAPK1 and CDK2.</text>
</comment>
<comment type="similarity">
    <text evidence="7">Belongs to the CDK2AP family.</text>
</comment>
<keyword id="KW-0002">3D-structure</keyword>
<keyword id="KW-0963">Cytoplasm</keyword>
<keyword id="KW-0539">Nucleus</keyword>
<keyword id="KW-0597">Phosphoprotein</keyword>
<keyword id="KW-1267">Proteomics identification</keyword>
<keyword id="KW-1185">Reference proteome</keyword>
<proteinExistence type="evidence at protein level"/>
<accession>O75956</accession>
<name>CDKA2_HUMAN</name>
<protein>
    <recommendedName>
        <fullName>Cyclin-dependent kinase 2-associated protein 2</fullName>
        <shortName>CDK2-associated protein 2</shortName>
    </recommendedName>
    <alternativeName>
        <fullName>DOC-1-related protein</fullName>
        <shortName>DOC-1R</shortName>
    </alternativeName>
</protein>
<dbReference type="EMBL" id="AF089814">
    <property type="protein sequence ID" value="AAC61745.1"/>
    <property type="molecule type" value="mRNA"/>
</dbReference>
<dbReference type="EMBL" id="BT006909">
    <property type="protein sequence ID" value="AAP35555.1"/>
    <property type="molecule type" value="mRNA"/>
</dbReference>
<dbReference type="EMBL" id="BC002850">
    <property type="protein sequence ID" value="AAH02850.1"/>
    <property type="molecule type" value="mRNA"/>
</dbReference>
<dbReference type="EMBL" id="BC016704">
    <property type="protein sequence ID" value="AAH16704.1"/>
    <property type="molecule type" value="mRNA"/>
</dbReference>
<dbReference type="CCDS" id="CCDS8169.1"/>
<dbReference type="RefSeq" id="NP_005842.1">
    <property type="nucleotide sequence ID" value="NM_005851.5"/>
</dbReference>
<dbReference type="PDB" id="2M1L">
    <property type="method" value="NMR"/>
    <property type="chains" value="A/B=61-126"/>
</dbReference>
<dbReference type="PDBsum" id="2M1L"/>
<dbReference type="BMRB" id="O75956"/>
<dbReference type="SMR" id="O75956"/>
<dbReference type="BioGRID" id="115555">
    <property type="interactions" value="47"/>
</dbReference>
<dbReference type="FunCoup" id="O75956">
    <property type="interactions" value="913"/>
</dbReference>
<dbReference type="IntAct" id="O75956">
    <property type="interactions" value="18"/>
</dbReference>
<dbReference type="MINT" id="O75956"/>
<dbReference type="STRING" id="9606.ENSP00000301488"/>
<dbReference type="BindingDB" id="O75956"/>
<dbReference type="ChEMBL" id="CHEMBL6010"/>
<dbReference type="GlyGen" id="O75956">
    <property type="glycosylation" value="4 sites, 1 O-linked glycan (2 sites)"/>
</dbReference>
<dbReference type="iPTMnet" id="O75956"/>
<dbReference type="PhosphoSitePlus" id="O75956"/>
<dbReference type="BioMuta" id="CDK2AP2"/>
<dbReference type="jPOST" id="O75956"/>
<dbReference type="MassIVE" id="O75956"/>
<dbReference type="PaxDb" id="9606-ENSP00000301488"/>
<dbReference type="PeptideAtlas" id="O75956"/>
<dbReference type="ProteomicsDB" id="50322"/>
<dbReference type="Pumba" id="O75956"/>
<dbReference type="Antibodypedia" id="30451">
    <property type="antibodies" value="167 antibodies from 23 providers"/>
</dbReference>
<dbReference type="DNASU" id="10263"/>
<dbReference type="Ensembl" id="ENST00000301488.8">
    <property type="protein sequence ID" value="ENSP00000301488.4"/>
    <property type="gene ID" value="ENSG00000167797.8"/>
</dbReference>
<dbReference type="GeneID" id="10263"/>
<dbReference type="KEGG" id="hsa:10263"/>
<dbReference type="MANE-Select" id="ENST00000301488.8">
    <property type="protein sequence ID" value="ENSP00000301488.4"/>
    <property type="RefSeq nucleotide sequence ID" value="NM_005851.5"/>
    <property type="RefSeq protein sequence ID" value="NP_005842.1"/>
</dbReference>
<dbReference type="AGR" id="HGNC:30833"/>
<dbReference type="CTD" id="10263"/>
<dbReference type="DisGeNET" id="10263"/>
<dbReference type="GeneCards" id="CDK2AP2"/>
<dbReference type="HGNC" id="HGNC:30833">
    <property type="gene designation" value="CDK2AP2"/>
</dbReference>
<dbReference type="HPA" id="ENSG00000167797">
    <property type="expression patterns" value="Low tissue specificity"/>
</dbReference>
<dbReference type="MIM" id="620061">
    <property type="type" value="gene"/>
</dbReference>
<dbReference type="neXtProt" id="NX_O75956"/>
<dbReference type="OpenTargets" id="ENSG00000167797"/>
<dbReference type="PharmGKB" id="PA128394572"/>
<dbReference type="VEuPathDB" id="HostDB:ENSG00000167797"/>
<dbReference type="eggNOG" id="KOG4713">
    <property type="taxonomic scope" value="Eukaryota"/>
</dbReference>
<dbReference type="GeneTree" id="ENSGT00940000160334"/>
<dbReference type="HOGENOM" id="CLU_130479_0_0_1"/>
<dbReference type="InParanoid" id="O75956"/>
<dbReference type="OMA" id="AHVTPKI"/>
<dbReference type="OrthoDB" id="9628807at2759"/>
<dbReference type="PAN-GO" id="O75956">
    <property type="GO annotations" value="5 GO annotations based on evolutionary models"/>
</dbReference>
<dbReference type="PhylomeDB" id="O75956"/>
<dbReference type="TreeFam" id="TF101037"/>
<dbReference type="PathwayCommons" id="O75956"/>
<dbReference type="SignaLink" id="O75956"/>
<dbReference type="BioGRID-ORCS" id="10263">
    <property type="hits" value="34 hits in 1159 CRISPR screens"/>
</dbReference>
<dbReference type="ChiTaRS" id="CDK2AP2">
    <property type="organism name" value="human"/>
</dbReference>
<dbReference type="EvolutionaryTrace" id="O75956"/>
<dbReference type="GenomeRNAi" id="10263"/>
<dbReference type="Pharos" id="O75956">
    <property type="development level" value="Tbio"/>
</dbReference>
<dbReference type="PRO" id="PR:O75956"/>
<dbReference type="Proteomes" id="UP000005640">
    <property type="component" value="Chromosome 11"/>
</dbReference>
<dbReference type="RNAct" id="O75956">
    <property type="molecule type" value="protein"/>
</dbReference>
<dbReference type="Bgee" id="ENSG00000167797">
    <property type="expression patterns" value="Expressed in mucosa of transverse colon and 191 other cell types or tissues"/>
</dbReference>
<dbReference type="ExpressionAtlas" id="O75956">
    <property type="expression patterns" value="baseline and differential"/>
</dbReference>
<dbReference type="GO" id="GO:0005737">
    <property type="term" value="C:cytoplasm"/>
    <property type="evidence" value="ECO:0000250"/>
    <property type="project" value="UniProtKB"/>
</dbReference>
<dbReference type="GO" id="GO:0005874">
    <property type="term" value="C:microtubule"/>
    <property type="evidence" value="ECO:0000250"/>
    <property type="project" value="UniProtKB"/>
</dbReference>
<dbReference type="GO" id="GO:0005634">
    <property type="term" value="C:nucleus"/>
    <property type="evidence" value="ECO:0000314"/>
    <property type="project" value="UniProtKB"/>
</dbReference>
<dbReference type="GO" id="GO:0016581">
    <property type="term" value="C:NuRD complex"/>
    <property type="evidence" value="ECO:0000314"/>
    <property type="project" value="UniProtKB"/>
</dbReference>
<dbReference type="GO" id="GO:2000134">
    <property type="term" value="P:negative regulation of G1/S transition of mitotic cell cycle"/>
    <property type="evidence" value="ECO:0000315"/>
    <property type="project" value="UniProtKB"/>
</dbReference>
<dbReference type="GO" id="GO:0070507">
    <property type="term" value="P:regulation of microtubule cytoskeleton organization"/>
    <property type="evidence" value="ECO:0000250"/>
    <property type="project" value="UniProtKB"/>
</dbReference>
<dbReference type="GO" id="GO:2000035">
    <property type="term" value="P:regulation of stem cell division"/>
    <property type="evidence" value="ECO:0000250"/>
    <property type="project" value="UniProtKB"/>
</dbReference>
<dbReference type="Gene3D" id="6.10.140.1300">
    <property type="match status" value="1"/>
</dbReference>
<dbReference type="InterPro" id="IPR017266">
    <property type="entry name" value="DOC_1/2"/>
</dbReference>
<dbReference type="PANTHER" id="PTHR22607:SF4">
    <property type="entry name" value="CYCLIN-DEPENDENT KINASE 2-ASSOCIATED PROTEIN 2"/>
    <property type="match status" value="1"/>
</dbReference>
<dbReference type="PANTHER" id="PTHR22607">
    <property type="entry name" value="DELETED IN ORAL CANCER 1/CDK2-ASSOCIATED PROTEIN 1"/>
    <property type="match status" value="1"/>
</dbReference>
<dbReference type="Pfam" id="PF09806">
    <property type="entry name" value="CDK2AP"/>
    <property type="match status" value="1"/>
</dbReference>
<dbReference type="PIRSF" id="PIRSF037709">
    <property type="entry name" value="CDK2-associated_p2"/>
    <property type="match status" value="1"/>
</dbReference>